<accession>Q3LU38</accession>
<evidence type="ECO:0000250" key="1"/>
<evidence type="ECO:0000255" key="2">
    <source>
        <dbReference type="PROSITE-ProRule" id="PRU00108"/>
    </source>
</evidence>
<evidence type="ECO:0000256" key="3">
    <source>
        <dbReference type="SAM" id="MobiDB-lite"/>
    </source>
</evidence>
<evidence type="ECO:0000305" key="4"/>
<proteinExistence type="inferred from homology"/>
<gene>
    <name type="primary">PROP1</name>
</gene>
<reference key="1">
    <citation type="submission" date="2005-08" db="EMBL/GenBank/DDBJ databases">
        <title>Comparative genomics reveal functional transcriptional control sequences in the Prop1 gene.</title>
        <authorList>
            <person name="Camper S.A."/>
            <person name="Ward R.D."/>
            <person name="Cho M."/>
            <person name="Esposito C."/>
            <person name="Lyons R.H."/>
            <person name="Cheng J.-F."/>
            <person name="Rubin E.M."/>
            <person name="Rhodes S.J."/>
            <person name="Raetzman L.T."/>
            <person name="Smith T.P.L."/>
        </authorList>
    </citation>
    <scope>NUCLEOTIDE SEQUENCE [GENOMIC DNA]</scope>
</reference>
<organism>
    <name type="scientific">Alouatta belzebul</name>
    <name type="common">Red-handed howler monkey</name>
    <dbReference type="NCBI Taxonomy" id="30590"/>
    <lineage>
        <taxon>Eukaryota</taxon>
        <taxon>Metazoa</taxon>
        <taxon>Chordata</taxon>
        <taxon>Craniata</taxon>
        <taxon>Vertebrata</taxon>
        <taxon>Euteleostomi</taxon>
        <taxon>Mammalia</taxon>
        <taxon>Eutheria</taxon>
        <taxon>Euarchontoglires</taxon>
        <taxon>Primates</taxon>
        <taxon>Haplorrhini</taxon>
        <taxon>Platyrrhini</taxon>
        <taxon>Atelidae</taxon>
        <taxon>Alouattinae</taxon>
        <taxon>Alouatta</taxon>
    </lineage>
</organism>
<name>PROP1_ALOBE</name>
<feature type="chain" id="PRO_0000049266" description="Homeobox protein prophet of Pit-1">
    <location>
        <begin position="1"/>
        <end position="226"/>
    </location>
</feature>
<feature type="DNA-binding region" description="Homeobox" evidence="2">
    <location>
        <begin position="69"/>
        <end position="128"/>
    </location>
</feature>
<feature type="region of interest" description="Disordered" evidence="3">
    <location>
        <begin position="29"/>
        <end position="73"/>
    </location>
</feature>
<feature type="region of interest" description="Disordered" evidence="3">
    <location>
        <begin position="178"/>
        <end position="226"/>
    </location>
</feature>
<feature type="compositionally biased region" description="Polar residues" evidence="3">
    <location>
        <begin position="31"/>
        <end position="41"/>
    </location>
</feature>
<feature type="compositionally biased region" description="Basic residues" evidence="3">
    <location>
        <begin position="64"/>
        <end position="73"/>
    </location>
</feature>
<feature type="compositionally biased region" description="Low complexity" evidence="3">
    <location>
        <begin position="216"/>
        <end position="226"/>
    </location>
</feature>
<protein>
    <recommendedName>
        <fullName>Homeobox protein prophet of Pit-1</fullName>
        <shortName>PROP-1</shortName>
    </recommendedName>
    <alternativeName>
        <fullName>Pituitary-specific homeodomain factor</fullName>
    </alternativeName>
</protein>
<comment type="function">
    <text evidence="1">Possibly involved in the ontogenesis of pituitary gonadotropes, as well as somatotropes, lactotropes and caudomedial thyrotropes.</text>
</comment>
<comment type="subcellular location">
    <subcellularLocation>
        <location evidence="2">Nucleus</location>
    </subcellularLocation>
</comment>
<comment type="similarity">
    <text evidence="4">Belongs to the paired homeobox family.</text>
</comment>
<sequence length="226" mass="25103">MEAERRSQPGKPKKGRVCSNLLLERHPAAGTLTTMVDSSAPPSRKLPSAGVGRPRFSPQGGQRSRPHSRRRHRTTFSAVQLEQLESAFGRNQYPDIWARESLARDTGLSEARIQVWFQNRRAKQRKQERSLLQPLAHLSPATFSGFLPESPAGPYSYTTPPPPVTCFPHPYSHAFPSQPSTGSTFALPHQSEDWYPTLHPAPAGHLPCPPPPPMLPLSLEPSKSWN</sequence>
<keyword id="KW-0238">DNA-binding</keyword>
<keyword id="KW-0371">Homeobox</keyword>
<keyword id="KW-0539">Nucleus</keyword>
<dbReference type="EMBL" id="DQ177427">
    <property type="protein sequence ID" value="ABA26454.1"/>
    <property type="molecule type" value="Genomic_DNA"/>
</dbReference>
<dbReference type="SMR" id="Q3LU38"/>
<dbReference type="GO" id="GO:0005634">
    <property type="term" value="C:nucleus"/>
    <property type="evidence" value="ECO:0007669"/>
    <property type="project" value="UniProtKB-SubCell"/>
</dbReference>
<dbReference type="GO" id="GO:0005667">
    <property type="term" value="C:transcription regulator complex"/>
    <property type="evidence" value="ECO:0007669"/>
    <property type="project" value="TreeGrafter"/>
</dbReference>
<dbReference type="GO" id="GO:0000981">
    <property type="term" value="F:DNA-binding transcription factor activity, RNA polymerase II-specific"/>
    <property type="evidence" value="ECO:0007669"/>
    <property type="project" value="InterPro"/>
</dbReference>
<dbReference type="GO" id="GO:0000978">
    <property type="term" value="F:RNA polymerase II cis-regulatory region sequence-specific DNA binding"/>
    <property type="evidence" value="ECO:0007669"/>
    <property type="project" value="TreeGrafter"/>
</dbReference>
<dbReference type="GO" id="GO:0021983">
    <property type="term" value="P:pituitary gland development"/>
    <property type="evidence" value="ECO:0007669"/>
    <property type="project" value="InterPro"/>
</dbReference>
<dbReference type="CDD" id="cd00086">
    <property type="entry name" value="homeodomain"/>
    <property type="match status" value="1"/>
</dbReference>
<dbReference type="FunFam" id="1.10.10.60:FF:000138">
    <property type="entry name" value="Homeobox protein prophet of Pit-1"/>
    <property type="match status" value="1"/>
</dbReference>
<dbReference type="Gene3D" id="1.10.10.60">
    <property type="entry name" value="Homeodomain-like"/>
    <property type="match status" value="1"/>
</dbReference>
<dbReference type="InterPro" id="IPR001356">
    <property type="entry name" value="HD"/>
</dbReference>
<dbReference type="InterPro" id="IPR017970">
    <property type="entry name" value="Homeobox_CS"/>
</dbReference>
<dbReference type="InterPro" id="IPR009057">
    <property type="entry name" value="Homeodomain-like_sf"/>
</dbReference>
<dbReference type="InterPro" id="IPR000047">
    <property type="entry name" value="HTH_motif"/>
</dbReference>
<dbReference type="InterPro" id="IPR042412">
    <property type="entry name" value="PROP1"/>
</dbReference>
<dbReference type="PANTHER" id="PTHR47409">
    <property type="entry name" value="HOMEOBOX PROTEIN PROPHET OF PIT-1"/>
    <property type="match status" value="1"/>
</dbReference>
<dbReference type="PANTHER" id="PTHR47409:SF1">
    <property type="entry name" value="HOMEOBOX PROTEIN PROPHET OF PIT-1"/>
    <property type="match status" value="1"/>
</dbReference>
<dbReference type="Pfam" id="PF00046">
    <property type="entry name" value="Homeodomain"/>
    <property type="match status" value="1"/>
</dbReference>
<dbReference type="PRINTS" id="PR00031">
    <property type="entry name" value="HTHREPRESSR"/>
</dbReference>
<dbReference type="SMART" id="SM00389">
    <property type="entry name" value="HOX"/>
    <property type="match status" value="1"/>
</dbReference>
<dbReference type="SUPFAM" id="SSF46689">
    <property type="entry name" value="Homeodomain-like"/>
    <property type="match status" value="1"/>
</dbReference>
<dbReference type="PROSITE" id="PS00027">
    <property type="entry name" value="HOMEOBOX_1"/>
    <property type="match status" value="1"/>
</dbReference>
<dbReference type="PROSITE" id="PS50071">
    <property type="entry name" value="HOMEOBOX_2"/>
    <property type="match status" value="1"/>
</dbReference>